<comment type="sequence caution" evidence="2">
    <conflict type="erroneous initiation">
        <sequence resource="EMBL-CDS" id="AAI11194"/>
    </conflict>
    <text>Extended N-terminus.</text>
</comment>
<gene>
    <name type="primary">CCDC175</name>
</gene>
<feature type="chain" id="PRO_0000259926" description="Coiled-coil domain-containing protein 175">
    <location>
        <begin position="1"/>
        <end position="724"/>
    </location>
</feature>
<feature type="coiled-coil region" evidence="1">
    <location>
        <begin position="131"/>
        <end position="164"/>
    </location>
</feature>
<feature type="coiled-coil region" evidence="1">
    <location>
        <begin position="203"/>
        <end position="256"/>
    </location>
</feature>
<feature type="coiled-coil region" evidence="1">
    <location>
        <begin position="282"/>
        <end position="373"/>
    </location>
</feature>
<feature type="coiled-coil region" evidence="1">
    <location>
        <begin position="426"/>
        <end position="534"/>
    </location>
</feature>
<feature type="coiled-coil region" evidence="1">
    <location>
        <begin position="565"/>
        <end position="627"/>
    </location>
</feature>
<proteinExistence type="evidence at transcript level"/>
<keyword id="KW-0175">Coiled coil</keyword>
<keyword id="KW-1185">Reference proteome</keyword>
<name>CC175_BOVIN</name>
<reference key="1">
    <citation type="submission" date="2005-12" db="EMBL/GenBank/DDBJ databases">
        <authorList>
            <consortium name="NIH - Mammalian Gene Collection (MGC) project"/>
        </authorList>
    </citation>
    <scope>NUCLEOTIDE SEQUENCE [LARGE SCALE MRNA]</scope>
    <source>
        <strain>Crossbred X Angus</strain>
        <tissue>Liver</tissue>
    </source>
</reference>
<evidence type="ECO:0000255" key="1"/>
<evidence type="ECO:0000305" key="2"/>
<accession>Q2T9Z6</accession>
<dbReference type="EMBL" id="BC111193">
    <property type="protein sequence ID" value="AAI11194.1"/>
    <property type="status" value="ALT_INIT"/>
    <property type="molecule type" value="mRNA"/>
</dbReference>
<dbReference type="RefSeq" id="NP_001033310.1">
    <property type="nucleotide sequence ID" value="NM_001038221.2"/>
</dbReference>
<dbReference type="SMR" id="Q2T9Z6"/>
<dbReference type="STRING" id="9913.ENSBTAP00000048814"/>
<dbReference type="PaxDb" id="9913-ENSBTAP00000015213"/>
<dbReference type="GeneID" id="617691"/>
<dbReference type="KEGG" id="bta:617691"/>
<dbReference type="CTD" id="729665"/>
<dbReference type="eggNOG" id="ENOG502RXX0">
    <property type="taxonomic scope" value="Eukaryota"/>
</dbReference>
<dbReference type="HOGENOM" id="CLU_345791_0_0_1"/>
<dbReference type="InParanoid" id="Q2T9Z6"/>
<dbReference type="OrthoDB" id="10031759at2759"/>
<dbReference type="TreeFam" id="TF351236"/>
<dbReference type="Proteomes" id="UP000009136">
    <property type="component" value="Unplaced"/>
</dbReference>
<dbReference type="InterPro" id="IPR038834">
    <property type="entry name" value="CCDC175"/>
</dbReference>
<dbReference type="PANTHER" id="PTHR35347">
    <property type="entry name" value="COILED-COIL DOMAIN-CONTAINING PROTEIN 175"/>
    <property type="match status" value="1"/>
</dbReference>
<dbReference type="PANTHER" id="PTHR35347:SF1">
    <property type="entry name" value="COILED-COIL DOMAIN-CONTAINING PROTEIN 175"/>
    <property type="match status" value="1"/>
</dbReference>
<protein>
    <recommendedName>
        <fullName>Coiled-coil domain-containing protein 175</fullName>
    </recommendedName>
</protein>
<sequence>MALSSWSPELGLGSEKALPVAAVSTGPSLELCTFPSTLGSSVATDALEQLLVVEQSLQSDYFKCNEEAKNFLKDVAIAVKKLEEMRKSTIDLLEIESMELSRLYFVLETLPTSVSRELEECVRDARRVNLVEMSELHTKITRINDEIEFLKKKILHLQTDNTALGERQEELAKHYGKIVLSVNHAMKEKATTTIYINETYTKINLEKKELELQKTYIQEIEEQIERERAEYLKKKEKLNQEIEEYKKLCELKRKETYAKKKELDKLRLTMTKMRETVTTSTVVLSDHNLELARLQESIREWEHKIEDMKKSCKILEDKMLFFKNNREKLDDSSNFEKSELLLKIKQMTEKLHNCRLENKALREKLHTVSRQYKIVLNEEDKVFMQKRKIYSENQKQLAFIAQKENFLSKRKVDIKNMEEGLITLGELHRATKEVYRKQIKILNENMERETQRCIITQWKIACLRKKHARWVKKIKDEIKELIDKIQEAENRRSELIEETSIREHDINEFLAKIEQLTLELKQEEDAFVIKERKLIQELSKFEQRFAEEAQISKEKEVELDKCLPQLQVAEEEFTDKNRKFQNLIETVTAQKNEQNLLNNNISQFTRDFIRYINNTKKVKQELKQLREHESYKTKAHFEILKSLENEIYLHDLKTDALILENKRLKEYIAYLKDNIEQYERGGEDLVRSSSDLSCQLTDLQTQYSDLWAEFWTTLKKRRKRVLLK</sequence>
<organism>
    <name type="scientific">Bos taurus</name>
    <name type="common">Bovine</name>
    <dbReference type="NCBI Taxonomy" id="9913"/>
    <lineage>
        <taxon>Eukaryota</taxon>
        <taxon>Metazoa</taxon>
        <taxon>Chordata</taxon>
        <taxon>Craniata</taxon>
        <taxon>Vertebrata</taxon>
        <taxon>Euteleostomi</taxon>
        <taxon>Mammalia</taxon>
        <taxon>Eutheria</taxon>
        <taxon>Laurasiatheria</taxon>
        <taxon>Artiodactyla</taxon>
        <taxon>Ruminantia</taxon>
        <taxon>Pecora</taxon>
        <taxon>Bovidae</taxon>
        <taxon>Bovinae</taxon>
        <taxon>Bos</taxon>
    </lineage>
</organism>